<gene>
    <name evidence="1" type="primary">atpA</name>
</gene>
<protein>
    <recommendedName>
        <fullName evidence="1">ATP synthase subunit alpha, chloroplastic</fullName>
        <ecNumber evidence="1">7.1.2.2</ecNumber>
    </recommendedName>
    <alternativeName>
        <fullName evidence="1">ATP synthase F1 sector subunit alpha</fullName>
    </alternativeName>
    <alternativeName>
        <fullName evidence="1">F-ATPase subunit alpha</fullName>
    </alternativeName>
</protein>
<organism>
    <name type="scientific">Chlorokybus atmophyticus</name>
    <name type="common">Soil alga</name>
    <dbReference type="NCBI Taxonomy" id="3144"/>
    <lineage>
        <taxon>Eukaryota</taxon>
        <taxon>Viridiplantae</taxon>
        <taxon>Streptophyta</taxon>
        <taxon>Chlorokybophyceae</taxon>
        <taxon>Chlorokybales</taxon>
        <taxon>Chlorokybaceae</taxon>
        <taxon>Chlorokybus</taxon>
    </lineage>
</organism>
<sequence>MIKIQPEEISSVIRKQIEQYNQEVKVVNIGTVLQVGDGIARIYGLAKVMAGELLEFEDGTIGIALNLESNNVGAVMMGEGLTIQEGSSVKATGKIAQIPVGEAYVGRVVNALARPIDGKGEIPTSEYRLLESPAPGIISRRSVYEPLQTGLVAIDAMIPIGRGQRELIIGDRQTGKTAVATDTILNQKGQNVICVYVAIGQKASSVAQVVNTLEERGAMEYTIVVAENANAPATLQYLAPYTGATLAEYFMYKGRHTLVIYDDLSKQAQAYREMSLLLRRPPGREAYPGDVFYLHSRLLERAAKLSTALGEGSMTALPVVETQAGDVSAYIPTNVISITDGQIFLSADLFNAGLRPAINVGISVSRVGSAAQVKAMKQVAGKLKLELAQFAELEAFSQFASDLDKATQNQLARGRRLRELLKQAQAAPLSVEEQVSTIYTGINGYLDSIEVEDVRKFLAGLRGFIAKSYPKVYEIVRTTKTFTTEAEDLLKEAINEYKKNFSATAA</sequence>
<proteinExistence type="inferred from homology"/>
<accession>Q19VA5</accession>
<name>ATPA_CHLAT</name>
<feature type="chain" id="PRO_0000339078" description="ATP synthase subunit alpha, chloroplastic">
    <location>
        <begin position="1"/>
        <end position="506"/>
    </location>
</feature>
<feature type="binding site" evidence="1">
    <location>
        <begin position="170"/>
        <end position="177"/>
    </location>
    <ligand>
        <name>ATP</name>
        <dbReference type="ChEBI" id="CHEBI:30616"/>
    </ligand>
</feature>
<feature type="site" description="Required for activity" evidence="1">
    <location>
        <position position="363"/>
    </location>
</feature>
<keyword id="KW-0066">ATP synthesis</keyword>
<keyword id="KW-0067">ATP-binding</keyword>
<keyword id="KW-0139">CF(1)</keyword>
<keyword id="KW-0150">Chloroplast</keyword>
<keyword id="KW-0375">Hydrogen ion transport</keyword>
<keyword id="KW-0406">Ion transport</keyword>
<keyword id="KW-0472">Membrane</keyword>
<keyword id="KW-0547">Nucleotide-binding</keyword>
<keyword id="KW-0934">Plastid</keyword>
<keyword id="KW-0793">Thylakoid</keyword>
<keyword id="KW-1278">Translocase</keyword>
<keyword id="KW-0813">Transport</keyword>
<comment type="function">
    <text evidence="1">Produces ATP from ADP in the presence of a proton gradient across the membrane. The alpha chain is a regulatory subunit.</text>
</comment>
<comment type="catalytic activity">
    <reaction evidence="1">
        <text>ATP + H2O + 4 H(+)(in) = ADP + phosphate + 5 H(+)(out)</text>
        <dbReference type="Rhea" id="RHEA:57720"/>
        <dbReference type="ChEBI" id="CHEBI:15377"/>
        <dbReference type="ChEBI" id="CHEBI:15378"/>
        <dbReference type="ChEBI" id="CHEBI:30616"/>
        <dbReference type="ChEBI" id="CHEBI:43474"/>
        <dbReference type="ChEBI" id="CHEBI:456216"/>
        <dbReference type="EC" id="7.1.2.2"/>
    </reaction>
</comment>
<comment type="subunit">
    <text evidence="1">F-type ATPases have 2 components, CF(1) - the catalytic core - and CF(0) - the membrane proton channel. CF(1) has five subunits: alpha(3), beta(3), gamma(1), delta(1), epsilon(1). CF(0) has four main subunits: a, b, b' and c.</text>
</comment>
<comment type="subcellular location">
    <subcellularLocation>
        <location evidence="1">Plastid</location>
        <location evidence="1">Chloroplast thylakoid membrane</location>
        <topology evidence="1">Peripheral membrane protein</topology>
    </subcellularLocation>
</comment>
<comment type="similarity">
    <text evidence="1">Belongs to the ATPase alpha/beta chains family.</text>
</comment>
<reference key="1">
    <citation type="journal article" date="2007" name="BMC Biol.">
        <title>A clade uniting the green algae Mesostigma viride and Chlorokybus atmophyticus represents the deepest branch of the Streptophyta in chloroplast genome-based phylogenies.</title>
        <authorList>
            <person name="Lemieux C."/>
            <person name="Otis C."/>
            <person name="Turmel M."/>
        </authorList>
    </citation>
    <scope>NUCLEOTIDE SEQUENCE [LARGE SCALE GENOMIC DNA]</scope>
    <source>
        <strain>SAG 48.80</strain>
    </source>
</reference>
<dbReference type="EC" id="7.1.2.2" evidence="1"/>
<dbReference type="EMBL" id="DQ422812">
    <property type="protein sequence ID" value="ABD62169.2"/>
    <property type="molecule type" value="Genomic_DNA"/>
</dbReference>
<dbReference type="RefSeq" id="YP_001019097.1">
    <property type="nucleotide sequence ID" value="NC_008822.1"/>
</dbReference>
<dbReference type="SMR" id="Q19VA5"/>
<dbReference type="GeneID" id="4783199"/>
<dbReference type="GO" id="GO:0009535">
    <property type="term" value="C:chloroplast thylakoid membrane"/>
    <property type="evidence" value="ECO:0007669"/>
    <property type="project" value="UniProtKB-SubCell"/>
</dbReference>
<dbReference type="GO" id="GO:0045259">
    <property type="term" value="C:proton-transporting ATP synthase complex"/>
    <property type="evidence" value="ECO:0007669"/>
    <property type="project" value="UniProtKB-KW"/>
</dbReference>
<dbReference type="GO" id="GO:0043531">
    <property type="term" value="F:ADP binding"/>
    <property type="evidence" value="ECO:0007669"/>
    <property type="project" value="TreeGrafter"/>
</dbReference>
<dbReference type="GO" id="GO:0005524">
    <property type="term" value="F:ATP binding"/>
    <property type="evidence" value="ECO:0007669"/>
    <property type="project" value="UniProtKB-UniRule"/>
</dbReference>
<dbReference type="GO" id="GO:0046933">
    <property type="term" value="F:proton-transporting ATP synthase activity, rotational mechanism"/>
    <property type="evidence" value="ECO:0007669"/>
    <property type="project" value="UniProtKB-UniRule"/>
</dbReference>
<dbReference type="CDD" id="cd18113">
    <property type="entry name" value="ATP-synt_F1_alpha_C"/>
    <property type="match status" value="1"/>
</dbReference>
<dbReference type="CDD" id="cd18116">
    <property type="entry name" value="ATP-synt_F1_alpha_N"/>
    <property type="match status" value="1"/>
</dbReference>
<dbReference type="CDD" id="cd01132">
    <property type="entry name" value="F1-ATPase_alpha_CD"/>
    <property type="match status" value="1"/>
</dbReference>
<dbReference type="FunFam" id="1.20.150.20:FF:000001">
    <property type="entry name" value="ATP synthase subunit alpha"/>
    <property type="match status" value="1"/>
</dbReference>
<dbReference type="FunFam" id="2.40.30.20:FF:000001">
    <property type="entry name" value="ATP synthase subunit alpha"/>
    <property type="match status" value="1"/>
</dbReference>
<dbReference type="FunFam" id="3.40.50.300:FF:000002">
    <property type="entry name" value="ATP synthase subunit alpha"/>
    <property type="match status" value="1"/>
</dbReference>
<dbReference type="Gene3D" id="2.40.30.20">
    <property type="match status" value="1"/>
</dbReference>
<dbReference type="Gene3D" id="1.20.150.20">
    <property type="entry name" value="ATP synthase alpha/beta chain, C-terminal domain"/>
    <property type="match status" value="1"/>
</dbReference>
<dbReference type="Gene3D" id="3.40.50.300">
    <property type="entry name" value="P-loop containing nucleotide triphosphate hydrolases"/>
    <property type="match status" value="1"/>
</dbReference>
<dbReference type="HAMAP" id="MF_01346">
    <property type="entry name" value="ATP_synth_alpha_bact"/>
    <property type="match status" value="1"/>
</dbReference>
<dbReference type="InterPro" id="IPR023366">
    <property type="entry name" value="ATP_synth_asu-like_sf"/>
</dbReference>
<dbReference type="InterPro" id="IPR000793">
    <property type="entry name" value="ATP_synth_asu_C"/>
</dbReference>
<dbReference type="InterPro" id="IPR038376">
    <property type="entry name" value="ATP_synth_asu_C_sf"/>
</dbReference>
<dbReference type="InterPro" id="IPR033732">
    <property type="entry name" value="ATP_synth_F1_a_nt-bd_dom"/>
</dbReference>
<dbReference type="InterPro" id="IPR005294">
    <property type="entry name" value="ATP_synth_F1_asu"/>
</dbReference>
<dbReference type="InterPro" id="IPR020003">
    <property type="entry name" value="ATPase_a/bsu_AS"/>
</dbReference>
<dbReference type="InterPro" id="IPR004100">
    <property type="entry name" value="ATPase_F1/V1/A1_a/bsu_N"/>
</dbReference>
<dbReference type="InterPro" id="IPR036121">
    <property type="entry name" value="ATPase_F1/V1/A1_a/bsu_N_sf"/>
</dbReference>
<dbReference type="InterPro" id="IPR000194">
    <property type="entry name" value="ATPase_F1/V1/A1_a/bsu_nucl-bd"/>
</dbReference>
<dbReference type="InterPro" id="IPR027417">
    <property type="entry name" value="P-loop_NTPase"/>
</dbReference>
<dbReference type="NCBIfam" id="TIGR00962">
    <property type="entry name" value="atpA"/>
    <property type="match status" value="1"/>
</dbReference>
<dbReference type="NCBIfam" id="NF009884">
    <property type="entry name" value="PRK13343.1"/>
    <property type="match status" value="1"/>
</dbReference>
<dbReference type="PANTHER" id="PTHR48082">
    <property type="entry name" value="ATP SYNTHASE SUBUNIT ALPHA, MITOCHONDRIAL"/>
    <property type="match status" value="1"/>
</dbReference>
<dbReference type="PANTHER" id="PTHR48082:SF2">
    <property type="entry name" value="ATP SYNTHASE SUBUNIT ALPHA, MITOCHONDRIAL"/>
    <property type="match status" value="1"/>
</dbReference>
<dbReference type="Pfam" id="PF00006">
    <property type="entry name" value="ATP-synt_ab"/>
    <property type="match status" value="1"/>
</dbReference>
<dbReference type="Pfam" id="PF00306">
    <property type="entry name" value="ATP-synt_ab_C"/>
    <property type="match status" value="1"/>
</dbReference>
<dbReference type="Pfam" id="PF02874">
    <property type="entry name" value="ATP-synt_ab_N"/>
    <property type="match status" value="1"/>
</dbReference>
<dbReference type="PIRSF" id="PIRSF039088">
    <property type="entry name" value="F_ATPase_subunit_alpha"/>
    <property type="match status" value="1"/>
</dbReference>
<dbReference type="SUPFAM" id="SSF47917">
    <property type="entry name" value="C-terminal domain of alpha and beta subunits of F1 ATP synthase"/>
    <property type="match status" value="1"/>
</dbReference>
<dbReference type="SUPFAM" id="SSF50615">
    <property type="entry name" value="N-terminal domain of alpha and beta subunits of F1 ATP synthase"/>
    <property type="match status" value="1"/>
</dbReference>
<dbReference type="SUPFAM" id="SSF52540">
    <property type="entry name" value="P-loop containing nucleoside triphosphate hydrolases"/>
    <property type="match status" value="1"/>
</dbReference>
<dbReference type="PROSITE" id="PS00152">
    <property type="entry name" value="ATPASE_ALPHA_BETA"/>
    <property type="match status" value="1"/>
</dbReference>
<evidence type="ECO:0000255" key="1">
    <source>
        <dbReference type="HAMAP-Rule" id="MF_01346"/>
    </source>
</evidence>
<geneLocation type="chloroplast"/>